<proteinExistence type="inferred from homology"/>
<dbReference type="EMBL" id="CP000151">
    <property type="protein sequence ID" value="ABB07436.1"/>
    <property type="molecule type" value="Genomic_DNA"/>
</dbReference>
<dbReference type="RefSeq" id="WP_011351022.1">
    <property type="nucleotide sequence ID" value="NC_007510.1"/>
</dbReference>
<dbReference type="SMR" id="Q39JD0"/>
<dbReference type="GeneID" id="45093748"/>
<dbReference type="KEGG" id="bur:Bcep18194_A3837"/>
<dbReference type="PATRIC" id="fig|482957.22.peg.704"/>
<dbReference type="HOGENOM" id="CLU_057217_6_1_4"/>
<dbReference type="Proteomes" id="UP000002705">
    <property type="component" value="Chromosome 1"/>
</dbReference>
<dbReference type="GO" id="GO:0005829">
    <property type="term" value="C:cytosol"/>
    <property type="evidence" value="ECO:0007669"/>
    <property type="project" value="TreeGrafter"/>
</dbReference>
<dbReference type="GO" id="GO:0000774">
    <property type="term" value="F:adenyl-nucleotide exchange factor activity"/>
    <property type="evidence" value="ECO:0007669"/>
    <property type="project" value="InterPro"/>
</dbReference>
<dbReference type="GO" id="GO:0042803">
    <property type="term" value="F:protein homodimerization activity"/>
    <property type="evidence" value="ECO:0007669"/>
    <property type="project" value="InterPro"/>
</dbReference>
<dbReference type="GO" id="GO:0051087">
    <property type="term" value="F:protein-folding chaperone binding"/>
    <property type="evidence" value="ECO:0007669"/>
    <property type="project" value="InterPro"/>
</dbReference>
<dbReference type="GO" id="GO:0051082">
    <property type="term" value="F:unfolded protein binding"/>
    <property type="evidence" value="ECO:0007669"/>
    <property type="project" value="TreeGrafter"/>
</dbReference>
<dbReference type="GO" id="GO:0006457">
    <property type="term" value="P:protein folding"/>
    <property type="evidence" value="ECO:0007669"/>
    <property type="project" value="InterPro"/>
</dbReference>
<dbReference type="CDD" id="cd00446">
    <property type="entry name" value="GrpE"/>
    <property type="match status" value="1"/>
</dbReference>
<dbReference type="FunFam" id="2.30.22.10:FF:000001">
    <property type="entry name" value="Protein GrpE"/>
    <property type="match status" value="1"/>
</dbReference>
<dbReference type="Gene3D" id="3.90.20.20">
    <property type="match status" value="1"/>
</dbReference>
<dbReference type="Gene3D" id="2.30.22.10">
    <property type="entry name" value="Head domain of nucleotide exchange factor GrpE"/>
    <property type="match status" value="1"/>
</dbReference>
<dbReference type="HAMAP" id="MF_01151">
    <property type="entry name" value="GrpE"/>
    <property type="match status" value="1"/>
</dbReference>
<dbReference type="InterPro" id="IPR000740">
    <property type="entry name" value="GrpE"/>
</dbReference>
<dbReference type="InterPro" id="IPR013805">
    <property type="entry name" value="GrpE_coiled_coil"/>
</dbReference>
<dbReference type="InterPro" id="IPR009012">
    <property type="entry name" value="GrpE_head"/>
</dbReference>
<dbReference type="NCBIfam" id="NF010737">
    <property type="entry name" value="PRK14139.1"/>
    <property type="match status" value="1"/>
</dbReference>
<dbReference type="NCBIfam" id="NF010738">
    <property type="entry name" value="PRK14140.1"/>
    <property type="match status" value="1"/>
</dbReference>
<dbReference type="NCBIfam" id="NF010748">
    <property type="entry name" value="PRK14150.1"/>
    <property type="match status" value="1"/>
</dbReference>
<dbReference type="PANTHER" id="PTHR21237">
    <property type="entry name" value="GRPE PROTEIN"/>
    <property type="match status" value="1"/>
</dbReference>
<dbReference type="PANTHER" id="PTHR21237:SF23">
    <property type="entry name" value="GRPE PROTEIN HOMOLOG, MITOCHONDRIAL"/>
    <property type="match status" value="1"/>
</dbReference>
<dbReference type="Pfam" id="PF01025">
    <property type="entry name" value="GrpE"/>
    <property type="match status" value="1"/>
</dbReference>
<dbReference type="PRINTS" id="PR00773">
    <property type="entry name" value="GRPEPROTEIN"/>
</dbReference>
<dbReference type="SUPFAM" id="SSF58014">
    <property type="entry name" value="Coiled-coil domain of nucleotide exchange factor GrpE"/>
    <property type="match status" value="1"/>
</dbReference>
<dbReference type="SUPFAM" id="SSF51064">
    <property type="entry name" value="Head domain of nucleotide exchange factor GrpE"/>
    <property type="match status" value="1"/>
</dbReference>
<dbReference type="PROSITE" id="PS01071">
    <property type="entry name" value="GRPE"/>
    <property type="match status" value="1"/>
</dbReference>
<keyword id="KW-0143">Chaperone</keyword>
<keyword id="KW-0963">Cytoplasm</keyword>
<keyword id="KW-0346">Stress response</keyword>
<sequence length="181" mass="19442">MENTQENPATQSAEDIGSEKQAAQGAAPAAEAADAALAEAQAKVAELQESYLRAKAETENVRRRAQDDVSKAHKFAIEGFAEHLLPVLDSLEAAVNDTSGDITKVREGVELTLRQLTNALEKGRVVALNPVGEKFDPHQHQAISMVPAEQEPNTVVTVLQKGYTIADRVLRPALVTVAQPK</sequence>
<comment type="function">
    <text evidence="1">Participates actively in the response to hyperosmotic and heat shock by preventing the aggregation of stress-denatured proteins, in association with DnaK and GrpE. It is the nucleotide exchange factor for DnaK and may function as a thermosensor. Unfolded proteins bind initially to DnaJ; upon interaction with the DnaJ-bound protein, DnaK hydrolyzes its bound ATP, resulting in the formation of a stable complex. GrpE releases ADP from DnaK; ATP binding to DnaK triggers the release of the substrate protein, thus completing the reaction cycle. Several rounds of ATP-dependent interactions between DnaJ, DnaK and GrpE are required for fully efficient folding.</text>
</comment>
<comment type="subunit">
    <text evidence="1">Homodimer.</text>
</comment>
<comment type="subcellular location">
    <subcellularLocation>
        <location evidence="1">Cytoplasm</location>
    </subcellularLocation>
</comment>
<comment type="similarity">
    <text evidence="1">Belongs to the GrpE family.</text>
</comment>
<protein>
    <recommendedName>
        <fullName evidence="1">Protein GrpE</fullName>
    </recommendedName>
    <alternativeName>
        <fullName evidence="1">HSP-70 cofactor</fullName>
    </alternativeName>
</protein>
<gene>
    <name evidence="1" type="primary">grpE</name>
    <name type="ordered locus">Bcep18194_A3837</name>
</gene>
<evidence type="ECO:0000255" key="1">
    <source>
        <dbReference type="HAMAP-Rule" id="MF_01151"/>
    </source>
</evidence>
<evidence type="ECO:0000256" key="2">
    <source>
        <dbReference type="SAM" id="MobiDB-lite"/>
    </source>
</evidence>
<organism>
    <name type="scientific">Burkholderia lata (strain ATCC 17760 / DSM 23089 / LMG 22485 / NCIMB 9086 / R18194 / 383)</name>
    <dbReference type="NCBI Taxonomy" id="482957"/>
    <lineage>
        <taxon>Bacteria</taxon>
        <taxon>Pseudomonadati</taxon>
        <taxon>Pseudomonadota</taxon>
        <taxon>Betaproteobacteria</taxon>
        <taxon>Burkholderiales</taxon>
        <taxon>Burkholderiaceae</taxon>
        <taxon>Burkholderia</taxon>
        <taxon>Burkholderia cepacia complex</taxon>
    </lineage>
</organism>
<feature type="chain" id="PRO_1000053560" description="Protein GrpE">
    <location>
        <begin position="1"/>
        <end position="181"/>
    </location>
</feature>
<feature type="region of interest" description="Disordered" evidence="2">
    <location>
        <begin position="1"/>
        <end position="39"/>
    </location>
</feature>
<feature type="compositionally biased region" description="Polar residues" evidence="2">
    <location>
        <begin position="1"/>
        <end position="13"/>
    </location>
</feature>
<feature type="compositionally biased region" description="Low complexity" evidence="2">
    <location>
        <begin position="21"/>
        <end position="39"/>
    </location>
</feature>
<accession>Q39JD0</accession>
<reference key="1">
    <citation type="submission" date="2005-10" db="EMBL/GenBank/DDBJ databases">
        <title>Complete sequence of chromosome 1 of Burkholderia sp. 383.</title>
        <authorList>
            <consortium name="US DOE Joint Genome Institute"/>
            <person name="Copeland A."/>
            <person name="Lucas S."/>
            <person name="Lapidus A."/>
            <person name="Barry K."/>
            <person name="Detter J.C."/>
            <person name="Glavina T."/>
            <person name="Hammon N."/>
            <person name="Israni S."/>
            <person name="Pitluck S."/>
            <person name="Chain P."/>
            <person name="Malfatti S."/>
            <person name="Shin M."/>
            <person name="Vergez L."/>
            <person name="Schmutz J."/>
            <person name="Larimer F."/>
            <person name="Land M."/>
            <person name="Kyrpides N."/>
            <person name="Lykidis A."/>
            <person name="Richardson P."/>
        </authorList>
    </citation>
    <scope>NUCLEOTIDE SEQUENCE [LARGE SCALE GENOMIC DNA]</scope>
    <source>
        <strain>ATCC 17760 / DSM 23089 / LMG 22485 / NCIMB 9086 / R18194 / 383</strain>
    </source>
</reference>
<name>GRPE_BURL3</name>